<protein>
    <recommendedName>
        <fullName evidence="1">Adenine phosphoribosyltransferase</fullName>
        <shortName evidence="1">APRT</shortName>
        <ecNumber evidence="1">2.4.2.7</ecNumber>
    </recommendedName>
</protein>
<sequence length="170" mass="19042">MKIENYIRDIQGFPKEGILFKDITPLLNNVEARQECLSILVNSLKGQKIDKVVGAESRGFFFGMLLAQELKAGFIPVRKPKKLPFDIISASYELEYGTDSLEMHIDAIKKGDRVLIHDDVLATGGTAKAVCELVEKLGGEIVQCNFLMELTFLNGRKKIKEYPVFAALTY</sequence>
<gene>
    <name evidence="1" type="primary">apt</name>
    <name type="ordered locus">Fjoh_2974</name>
</gene>
<evidence type="ECO:0000255" key="1">
    <source>
        <dbReference type="HAMAP-Rule" id="MF_00004"/>
    </source>
</evidence>
<comment type="function">
    <text evidence="1">Catalyzes a salvage reaction resulting in the formation of AMP, that is energically less costly than de novo synthesis.</text>
</comment>
<comment type="catalytic activity">
    <reaction evidence="1">
        <text>AMP + diphosphate = 5-phospho-alpha-D-ribose 1-diphosphate + adenine</text>
        <dbReference type="Rhea" id="RHEA:16609"/>
        <dbReference type="ChEBI" id="CHEBI:16708"/>
        <dbReference type="ChEBI" id="CHEBI:33019"/>
        <dbReference type="ChEBI" id="CHEBI:58017"/>
        <dbReference type="ChEBI" id="CHEBI:456215"/>
        <dbReference type="EC" id="2.4.2.7"/>
    </reaction>
</comment>
<comment type="pathway">
    <text evidence="1">Purine metabolism; AMP biosynthesis via salvage pathway; AMP from adenine: step 1/1.</text>
</comment>
<comment type="subunit">
    <text evidence="1">Homodimer.</text>
</comment>
<comment type="subcellular location">
    <subcellularLocation>
        <location evidence="1">Cytoplasm</location>
    </subcellularLocation>
</comment>
<comment type="similarity">
    <text evidence="1">Belongs to the purine/pyrimidine phosphoribosyltransferase family.</text>
</comment>
<accession>A5FFL9</accession>
<feature type="chain" id="PRO_1000073792" description="Adenine phosphoribosyltransferase">
    <location>
        <begin position="1"/>
        <end position="170"/>
    </location>
</feature>
<dbReference type="EC" id="2.4.2.7" evidence="1"/>
<dbReference type="EMBL" id="CP000685">
    <property type="protein sequence ID" value="ABQ05995.1"/>
    <property type="molecule type" value="Genomic_DNA"/>
</dbReference>
<dbReference type="RefSeq" id="WP_012025033.1">
    <property type="nucleotide sequence ID" value="NC_009441.1"/>
</dbReference>
<dbReference type="SMR" id="A5FFL9"/>
<dbReference type="STRING" id="376686.Fjoh_2974"/>
<dbReference type="KEGG" id="fjo:Fjoh_2974"/>
<dbReference type="eggNOG" id="COG0503">
    <property type="taxonomic scope" value="Bacteria"/>
</dbReference>
<dbReference type="HOGENOM" id="CLU_063339_3_0_10"/>
<dbReference type="OrthoDB" id="9803963at2"/>
<dbReference type="UniPathway" id="UPA00588">
    <property type="reaction ID" value="UER00646"/>
</dbReference>
<dbReference type="Proteomes" id="UP000006694">
    <property type="component" value="Chromosome"/>
</dbReference>
<dbReference type="GO" id="GO:0005737">
    <property type="term" value="C:cytoplasm"/>
    <property type="evidence" value="ECO:0007669"/>
    <property type="project" value="UniProtKB-SubCell"/>
</dbReference>
<dbReference type="GO" id="GO:0002055">
    <property type="term" value="F:adenine binding"/>
    <property type="evidence" value="ECO:0007669"/>
    <property type="project" value="TreeGrafter"/>
</dbReference>
<dbReference type="GO" id="GO:0003999">
    <property type="term" value="F:adenine phosphoribosyltransferase activity"/>
    <property type="evidence" value="ECO:0007669"/>
    <property type="project" value="UniProtKB-UniRule"/>
</dbReference>
<dbReference type="GO" id="GO:0016208">
    <property type="term" value="F:AMP binding"/>
    <property type="evidence" value="ECO:0007669"/>
    <property type="project" value="TreeGrafter"/>
</dbReference>
<dbReference type="GO" id="GO:0006168">
    <property type="term" value="P:adenine salvage"/>
    <property type="evidence" value="ECO:0007669"/>
    <property type="project" value="InterPro"/>
</dbReference>
<dbReference type="GO" id="GO:0044209">
    <property type="term" value="P:AMP salvage"/>
    <property type="evidence" value="ECO:0007669"/>
    <property type="project" value="UniProtKB-UniRule"/>
</dbReference>
<dbReference type="GO" id="GO:0006166">
    <property type="term" value="P:purine ribonucleoside salvage"/>
    <property type="evidence" value="ECO:0007669"/>
    <property type="project" value="UniProtKB-KW"/>
</dbReference>
<dbReference type="CDD" id="cd06223">
    <property type="entry name" value="PRTases_typeI"/>
    <property type="match status" value="1"/>
</dbReference>
<dbReference type="FunFam" id="3.40.50.2020:FF:000004">
    <property type="entry name" value="Adenine phosphoribosyltransferase"/>
    <property type="match status" value="1"/>
</dbReference>
<dbReference type="Gene3D" id="3.40.50.2020">
    <property type="match status" value="1"/>
</dbReference>
<dbReference type="HAMAP" id="MF_00004">
    <property type="entry name" value="Aden_phosphoribosyltr"/>
    <property type="match status" value="1"/>
</dbReference>
<dbReference type="InterPro" id="IPR005764">
    <property type="entry name" value="Ade_phspho_trans"/>
</dbReference>
<dbReference type="InterPro" id="IPR000836">
    <property type="entry name" value="PRibTrfase_dom"/>
</dbReference>
<dbReference type="InterPro" id="IPR029057">
    <property type="entry name" value="PRTase-like"/>
</dbReference>
<dbReference type="InterPro" id="IPR050054">
    <property type="entry name" value="UPRTase/APRTase"/>
</dbReference>
<dbReference type="NCBIfam" id="TIGR01090">
    <property type="entry name" value="apt"/>
    <property type="match status" value="1"/>
</dbReference>
<dbReference type="NCBIfam" id="NF002634">
    <property type="entry name" value="PRK02304.1-3"/>
    <property type="match status" value="1"/>
</dbReference>
<dbReference type="NCBIfam" id="NF002636">
    <property type="entry name" value="PRK02304.1-5"/>
    <property type="match status" value="1"/>
</dbReference>
<dbReference type="PANTHER" id="PTHR32315">
    <property type="entry name" value="ADENINE PHOSPHORIBOSYLTRANSFERASE"/>
    <property type="match status" value="1"/>
</dbReference>
<dbReference type="PANTHER" id="PTHR32315:SF3">
    <property type="entry name" value="ADENINE PHOSPHORIBOSYLTRANSFERASE"/>
    <property type="match status" value="1"/>
</dbReference>
<dbReference type="Pfam" id="PF00156">
    <property type="entry name" value="Pribosyltran"/>
    <property type="match status" value="1"/>
</dbReference>
<dbReference type="SUPFAM" id="SSF53271">
    <property type="entry name" value="PRTase-like"/>
    <property type="match status" value="1"/>
</dbReference>
<proteinExistence type="inferred from homology"/>
<organism>
    <name type="scientific">Flavobacterium johnsoniae (strain ATCC 17061 / DSM 2064 / JCM 8514 / BCRC 14874 / CCUG 350202 / NBRC 14942 / NCIMB 11054 / UW101)</name>
    <name type="common">Cytophaga johnsonae</name>
    <dbReference type="NCBI Taxonomy" id="376686"/>
    <lineage>
        <taxon>Bacteria</taxon>
        <taxon>Pseudomonadati</taxon>
        <taxon>Bacteroidota</taxon>
        <taxon>Flavobacteriia</taxon>
        <taxon>Flavobacteriales</taxon>
        <taxon>Flavobacteriaceae</taxon>
        <taxon>Flavobacterium</taxon>
    </lineage>
</organism>
<keyword id="KW-0963">Cytoplasm</keyword>
<keyword id="KW-0328">Glycosyltransferase</keyword>
<keyword id="KW-0660">Purine salvage</keyword>
<keyword id="KW-0808">Transferase</keyword>
<name>APT_FLAJ1</name>
<reference key="1">
    <citation type="journal article" date="2009" name="Appl. Environ. Microbiol.">
        <title>Novel features of the polysaccharide-digesting gliding bacterium Flavobacterium johnsoniae as revealed by genome sequence analysis.</title>
        <authorList>
            <person name="McBride M.J."/>
            <person name="Xie G."/>
            <person name="Martens E.C."/>
            <person name="Lapidus A."/>
            <person name="Henrissat B."/>
            <person name="Rhodes R.G."/>
            <person name="Goltsman E."/>
            <person name="Wang W."/>
            <person name="Xu J."/>
            <person name="Hunnicutt D.W."/>
            <person name="Staroscik A.M."/>
            <person name="Hoover T.R."/>
            <person name="Cheng Y.Q."/>
            <person name="Stein J.L."/>
        </authorList>
    </citation>
    <scope>NUCLEOTIDE SEQUENCE [LARGE SCALE GENOMIC DNA]</scope>
    <source>
        <strain>ATCC 17061 / DSM 2064 / JCM 8514 / BCRC 14874 / CCUG 350202 / NBRC 14942 / NCIMB 11054 / UW101</strain>
    </source>
</reference>